<feature type="chain" id="PRO_1000120733" description="Small ribosomal subunit protein bS6">
    <location>
        <begin position="1"/>
        <end position="124"/>
    </location>
</feature>
<feature type="region of interest" description="Disordered" evidence="2">
    <location>
        <begin position="96"/>
        <end position="124"/>
    </location>
</feature>
<feature type="compositionally biased region" description="Polar residues" evidence="2">
    <location>
        <begin position="115"/>
        <end position="124"/>
    </location>
</feature>
<gene>
    <name evidence="1" type="primary">rpsF</name>
    <name type="ordered locus">RALTA_A1823</name>
</gene>
<reference key="1">
    <citation type="journal article" date="2008" name="Genome Res.">
        <title>Genome sequence of the beta-rhizobium Cupriavidus taiwanensis and comparative genomics of rhizobia.</title>
        <authorList>
            <person name="Amadou C."/>
            <person name="Pascal G."/>
            <person name="Mangenot S."/>
            <person name="Glew M."/>
            <person name="Bontemps C."/>
            <person name="Capela D."/>
            <person name="Carrere S."/>
            <person name="Cruveiller S."/>
            <person name="Dossat C."/>
            <person name="Lajus A."/>
            <person name="Marchetti M."/>
            <person name="Poinsot V."/>
            <person name="Rouy Z."/>
            <person name="Servin B."/>
            <person name="Saad M."/>
            <person name="Schenowitz C."/>
            <person name="Barbe V."/>
            <person name="Batut J."/>
            <person name="Medigue C."/>
            <person name="Masson-Boivin C."/>
        </authorList>
    </citation>
    <scope>NUCLEOTIDE SEQUENCE [LARGE SCALE GENOMIC DNA]</scope>
    <source>
        <strain>DSM 17343 / BCRC 17206 / CCUG 44338 / CIP 107171 / LMG 19424 / R1</strain>
    </source>
</reference>
<accession>B3R2P7</accession>
<evidence type="ECO:0000255" key="1">
    <source>
        <dbReference type="HAMAP-Rule" id="MF_00360"/>
    </source>
</evidence>
<evidence type="ECO:0000256" key="2">
    <source>
        <dbReference type="SAM" id="MobiDB-lite"/>
    </source>
</evidence>
<evidence type="ECO:0000305" key="3"/>
<comment type="function">
    <text evidence="1">Binds together with bS18 to 16S ribosomal RNA.</text>
</comment>
<comment type="similarity">
    <text evidence="1">Belongs to the bacterial ribosomal protein bS6 family.</text>
</comment>
<proteinExistence type="inferred from homology"/>
<name>RS6_CUPTR</name>
<sequence length="124" mass="14322">MRHYEIVFIVHPDQSEQVPAMIERYKQLVTSQNGNVHRVEDWGRRQMAYMIQKLAKAHYVCLNIECGKETLAELEHAFKFNDAVLRHLIVQTKKAETAPSPMMKEVQREEARKAAQTTTEGQAA</sequence>
<dbReference type="EMBL" id="CU633749">
    <property type="protein sequence ID" value="CAQ69765.1"/>
    <property type="molecule type" value="Genomic_DNA"/>
</dbReference>
<dbReference type="RefSeq" id="WP_010809513.1">
    <property type="nucleotide sequence ID" value="NC_010528.1"/>
</dbReference>
<dbReference type="SMR" id="B3R2P7"/>
<dbReference type="GeneID" id="34310605"/>
<dbReference type="KEGG" id="cti:RALTA_A1823"/>
<dbReference type="eggNOG" id="COG0360">
    <property type="taxonomic scope" value="Bacteria"/>
</dbReference>
<dbReference type="HOGENOM" id="CLU_113441_6_1_4"/>
<dbReference type="BioCyc" id="CTAI977880:RALTA_RS08790-MONOMER"/>
<dbReference type="Proteomes" id="UP000001692">
    <property type="component" value="Chromosome 1"/>
</dbReference>
<dbReference type="GO" id="GO:0022627">
    <property type="term" value="C:cytosolic small ribosomal subunit"/>
    <property type="evidence" value="ECO:0007669"/>
    <property type="project" value="TreeGrafter"/>
</dbReference>
<dbReference type="GO" id="GO:0070181">
    <property type="term" value="F:small ribosomal subunit rRNA binding"/>
    <property type="evidence" value="ECO:0007669"/>
    <property type="project" value="TreeGrafter"/>
</dbReference>
<dbReference type="GO" id="GO:0003735">
    <property type="term" value="F:structural constituent of ribosome"/>
    <property type="evidence" value="ECO:0007669"/>
    <property type="project" value="InterPro"/>
</dbReference>
<dbReference type="GO" id="GO:0006412">
    <property type="term" value="P:translation"/>
    <property type="evidence" value="ECO:0007669"/>
    <property type="project" value="UniProtKB-UniRule"/>
</dbReference>
<dbReference type="CDD" id="cd00473">
    <property type="entry name" value="bS6"/>
    <property type="match status" value="1"/>
</dbReference>
<dbReference type="Gene3D" id="3.30.70.60">
    <property type="match status" value="1"/>
</dbReference>
<dbReference type="HAMAP" id="MF_00360">
    <property type="entry name" value="Ribosomal_bS6"/>
    <property type="match status" value="1"/>
</dbReference>
<dbReference type="InterPro" id="IPR000529">
    <property type="entry name" value="Ribosomal_bS6"/>
</dbReference>
<dbReference type="InterPro" id="IPR035980">
    <property type="entry name" value="Ribosomal_bS6_sf"/>
</dbReference>
<dbReference type="InterPro" id="IPR020814">
    <property type="entry name" value="Ribosomal_S6_plastid/chlpt"/>
</dbReference>
<dbReference type="InterPro" id="IPR014717">
    <property type="entry name" value="Transl_elong_EF1B/ribsomal_bS6"/>
</dbReference>
<dbReference type="NCBIfam" id="TIGR00166">
    <property type="entry name" value="S6"/>
    <property type="match status" value="1"/>
</dbReference>
<dbReference type="PANTHER" id="PTHR21011">
    <property type="entry name" value="MITOCHONDRIAL 28S RIBOSOMAL PROTEIN S6"/>
    <property type="match status" value="1"/>
</dbReference>
<dbReference type="PANTHER" id="PTHR21011:SF1">
    <property type="entry name" value="SMALL RIBOSOMAL SUBUNIT PROTEIN BS6M"/>
    <property type="match status" value="1"/>
</dbReference>
<dbReference type="Pfam" id="PF01250">
    <property type="entry name" value="Ribosomal_S6"/>
    <property type="match status" value="1"/>
</dbReference>
<dbReference type="SUPFAM" id="SSF54995">
    <property type="entry name" value="Ribosomal protein S6"/>
    <property type="match status" value="1"/>
</dbReference>
<protein>
    <recommendedName>
        <fullName evidence="1">Small ribosomal subunit protein bS6</fullName>
    </recommendedName>
    <alternativeName>
        <fullName evidence="3">30S ribosomal protein S6</fullName>
    </alternativeName>
</protein>
<organism>
    <name type="scientific">Cupriavidus taiwanensis (strain DSM 17343 / BCRC 17206 / CCUG 44338 / CIP 107171 / LMG 19424 / R1)</name>
    <name type="common">Ralstonia taiwanensis (strain LMG 19424)</name>
    <dbReference type="NCBI Taxonomy" id="977880"/>
    <lineage>
        <taxon>Bacteria</taxon>
        <taxon>Pseudomonadati</taxon>
        <taxon>Pseudomonadota</taxon>
        <taxon>Betaproteobacteria</taxon>
        <taxon>Burkholderiales</taxon>
        <taxon>Burkholderiaceae</taxon>
        <taxon>Cupriavidus</taxon>
    </lineage>
</organism>
<keyword id="KW-0687">Ribonucleoprotein</keyword>
<keyword id="KW-0689">Ribosomal protein</keyword>
<keyword id="KW-0694">RNA-binding</keyword>
<keyword id="KW-0699">rRNA-binding</keyword>